<gene>
    <name evidence="1" type="primary">ACU-7</name>
    <name type="ORF">CC1G_07122</name>
</gene>
<feature type="chain" id="PRO_0000333260" description="Isocitrate lyase">
    <location>
        <begin position="1"/>
        <end position="538"/>
    </location>
</feature>
<feature type="region of interest" description="Disordered" evidence="6">
    <location>
        <begin position="98"/>
        <end position="117"/>
    </location>
</feature>
<feature type="short sequence motif" description="Microbody targeting signal" evidence="5">
    <location>
        <begin position="536"/>
        <end position="538"/>
    </location>
</feature>
<feature type="active site" description="Proton acceptor" evidence="4">
    <location>
        <position position="203"/>
    </location>
</feature>
<feature type="binding site" evidence="4">
    <location>
        <begin position="94"/>
        <end position="96"/>
    </location>
    <ligand>
        <name>substrate</name>
    </ligand>
</feature>
<feature type="binding site" evidence="4">
    <location>
        <position position="165"/>
    </location>
    <ligand>
        <name>Mg(2+)</name>
        <dbReference type="ChEBI" id="CHEBI:18420"/>
    </ligand>
</feature>
<feature type="binding site" evidence="4">
    <location>
        <begin position="204"/>
        <end position="205"/>
    </location>
    <ligand>
        <name>substrate</name>
    </ligand>
</feature>
<feature type="binding site" evidence="4">
    <location>
        <position position="240"/>
    </location>
    <ligand>
        <name>substrate</name>
    </ligand>
</feature>
<feature type="binding site" evidence="4">
    <location>
        <begin position="420"/>
        <end position="424"/>
    </location>
    <ligand>
        <name>substrate</name>
    </ligand>
</feature>
<feature type="binding site" evidence="4">
    <location>
        <position position="455"/>
    </location>
    <ligand>
        <name>substrate</name>
    </ligand>
</feature>
<comment type="function">
    <text evidence="2">Catalyzes the formation of succinate and glyoxylate from isocitrate, a key step of the glyoxylate cycle, which operates as an anaplerotic route for replenishing the tricarboxylic acid cycle. Required for growth on ethanol or acetate, but dispensable when fermentable carbon sources are available. Also acts on 2-methylisocitrate.</text>
</comment>
<comment type="catalytic activity">
    <reaction evidence="2">
        <text>D-threo-isocitrate = glyoxylate + succinate</text>
        <dbReference type="Rhea" id="RHEA:13245"/>
        <dbReference type="ChEBI" id="CHEBI:15562"/>
        <dbReference type="ChEBI" id="CHEBI:30031"/>
        <dbReference type="ChEBI" id="CHEBI:36655"/>
        <dbReference type="EC" id="4.1.3.1"/>
    </reaction>
</comment>
<comment type="catalytic activity">
    <reaction evidence="2">
        <text>(2S,3R)-3-hydroxybutane-1,2,3-tricarboxylate = pyruvate + succinate</text>
        <dbReference type="Rhea" id="RHEA:16809"/>
        <dbReference type="ChEBI" id="CHEBI:15361"/>
        <dbReference type="ChEBI" id="CHEBI:30031"/>
        <dbReference type="ChEBI" id="CHEBI:57429"/>
        <dbReference type="EC" id="4.1.3.30"/>
    </reaction>
</comment>
<comment type="cofactor">
    <cofactor evidence="4">
        <name>Mg(2+)</name>
        <dbReference type="ChEBI" id="CHEBI:18420"/>
    </cofactor>
</comment>
<comment type="pathway">
    <text>Carbohydrate metabolism; glyoxylate cycle; (S)-malate from isocitrate: step 1/2.</text>
</comment>
<comment type="subunit">
    <text evidence="2">Homotetramer.</text>
</comment>
<comment type="subcellular location">
    <subcellularLocation>
        <location evidence="3">Glyoxysome</location>
    </subcellularLocation>
</comment>
<comment type="similarity">
    <text evidence="7">Belongs to the isocitrate lyase/PEP mutase superfamily. Isocitrate lyase family.</text>
</comment>
<dbReference type="EC" id="4.1.3.1" evidence="2"/>
<dbReference type="EC" id="4.1.3.30" evidence="2"/>
<dbReference type="EMBL" id="AACS02000008">
    <property type="protein sequence ID" value="EAU86043.1"/>
    <property type="molecule type" value="Genomic_DNA"/>
</dbReference>
<dbReference type="RefSeq" id="XP_001835698.1">
    <property type="nucleotide sequence ID" value="XM_001835646.1"/>
</dbReference>
<dbReference type="SMR" id="A8NR45"/>
<dbReference type="FunCoup" id="A8NR45">
    <property type="interactions" value="77"/>
</dbReference>
<dbReference type="STRING" id="240176.A8NR45"/>
<dbReference type="GeneID" id="6012236"/>
<dbReference type="KEGG" id="cci:CC1G_07122"/>
<dbReference type="VEuPathDB" id="FungiDB:CC1G_07122"/>
<dbReference type="eggNOG" id="KOG1260">
    <property type="taxonomic scope" value="Eukaryota"/>
</dbReference>
<dbReference type="HOGENOM" id="CLU_019214_2_2_1"/>
<dbReference type="InParanoid" id="A8NR45"/>
<dbReference type="OMA" id="YVSGWQV"/>
<dbReference type="OrthoDB" id="4078635at2759"/>
<dbReference type="UniPathway" id="UPA00703">
    <property type="reaction ID" value="UER00719"/>
</dbReference>
<dbReference type="Proteomes" id="UP000001861">
    <property type="component" value="Unassembled WGS sequence"/>
</dbReference>
<dbReference type="GO" id="GO:0009514">
    <property type="term" value="C:glyoxysome"/>
    <property type="evidence" value="ECO:0007669"/>
    <property type="project" value="UniProtKB-SubCell"/>
</dbReference>
<dbReference type="GO" id="GO:0004451">
    <property type="term" value="F:isocitrate lyase activity"/>
    <property type="evidence" value="ECO:0007669"/>
    <property type="project" value="UniProtKB-EC"/>
</dbReference>
<dbReference type="GO" id="GO:0046872">
    <property type="term" value="F:metal ion binding"/>
    <property type="evidence" value="ECO:0007669"/>
    <property type="project" value="UniProtKB-KW"/>
</dbReference>
<dbReference type="GO" id="GO:0046421">
    <property type="term" value="F:methylisocitrate lyase activity"/>
    <property type="evidence" value="ECO:0007669"/>
    <property type="project" value="UniProtKB-EC"/>
</dbReference>
<dbReference type="GO" id="GO:0006097">
    <property type="term" value="P:glyoxylate cycle"/>
    <property type="evidence" value="ECO:0007669"/>
    <property type="project" value="UniProtKB-UniPathway"/>
</dbReference>
<dbReference type="GO" id="GO:0006099">
    <property type="term" value="P:tricarboxylic acid cycle"/>
    <property type="evidence" value="ECO:0007669"/>
    <property type="project" value="UniProtKB-KW"/>
</dbReference>
<dbReference type="CDD" id="cd00377">
    <property type="entry name" value="ICL_PEPM"/>
    <property type="match status" value="1"/>
</dbReference>
<dbReference type="FunFam" id="1.10.10.850:FF:000001">
    <property type="entry name" value="Isocitrate lyase"/>
    <property type="match status" value="1"/>
</dbReference>
<dbReference type="Gene3D" id="1.10.10.850">
    <property type="match status" value="1"/>
</dbReference>
<dbReference type="Gene3D" id="3.20.20.60">
    <property type="entry name" value="Phosphoenolpyruvate-binding domains"/>
    <property type="match status" value="1"/>
</dbReference>
<dbReference type="InterPro" id="IPR039556">
    <property type="entry name" value="ICL/PEPM"/>
</dbReference>
<dbReference type="InterPro" id="IPR006254">
    <property type="entry name" value="Isocitrate_lyase"/>
</dbReference>
<dbReference type="InterPro" id="IPR018523">
    <property type="entry name" value="Isocitrate_lyase_ph_CS"/>
</dbReference>
<dbReference type="InterPro" id="IPR015813">
    <property type="entry name" value="Pyrv/PenolPyrv_kinase-like_dom"/>
</dbReference>
<dbReference type="InterPro" id="IPR040442">
    <property type="entry name" value="Pyrv_kinase-like_dom_sf"/>
</dbReference>
<dbReference type="NCBIfam" id="TIGR01346">
    <property type="entry name" value="isocit_lyase"/>
    <property type="match status" value="1"/>
</dbReference>
<dbReference type="PANTHER" id="PTHR21631:SF3">
    <property type="entry name" value="BIFUNCTIONAL GLYOXYLATE CYCLE PROTEIN"/>
    <property type="match status" value="1"/>
</dbReference>
<dbReference type="PANTHER" id="PTHR21631">
    <property type="entry name" value="ISOCITRATE LYASE/MALATE SYNTHASE"/>
    <property type="match status" value="1"/>
</dbReference>
<dbReference type="Pfam" id="PF00463">
    <property type="entry name" value="ICL"/>
    <property type="match status" value="1"/>
</dbReference>
<dbReference type="PIRSF" id="PIRSF001362">
    <property type="entry name" value="Isocit_lyase"/>
    <property type="match status" value="1"/>
</dbReference>
<dbReference type="SUPFAM" id="SSF51621">
    <property type="entry name" value="Phosphoenolpyruvate/pyruvate domain"/>
    <property type="match status" value="1"/>
</dbReference>
<dbReference type="PROSITE" id="PS00161">
    <property type="entry name" value="ISOCITRATE_LYASE"/>
    <property type="match status" value="1"/>
</dbReference>
<evidence type="ECO:0000250" key="1">
    <source>
        <dbReference type="UniProtKB" id="O13439"/>
    </source>
</evidence>
<evidence type="ECO:0000250" key="2">
    <source>
        <dbReference type="UniProtKB" id="P28240"/>
    </source>
</evidence>
<evidence type="ECO:0000250" key="3">
    <source>
        <dbReference type="UniProtKB" id="P28299"/>
    </source>
</evidence>
<evidence type="ECO:0000250" key="4">
    <source>
        <dbReference type="UniProtKB" id="P9WKK7"/>
    </source>
</evidence>
<evidence type="ECO:0000255" key="5"/>
<evidence type="ECO:0000256" key="6">
    <source>
        <dbReference type="SAM" id="MobiDB-lite"/>
    </source>
</evidence>
<evidence type="ECO:0000305" key="7"/>
<name>ACEA_COPC7</name>
<proteinExistence type="inferred from homology"/>
<reference key="1">
    <citation type="journal article" date="2010" name="Proc. Natl. Acad. Sci. U.S.A.">
        <title>Insights into evolution of multicellular fungi from the assembled chromosomes of the mushroom Coprinopsis cinerea (Coprinus cinereus).</title>
        <authorList>
            <person name="Stajich J.E."/>
            <person name="Wilke S.K."/>
            <person name="Ahren D."/>
            <person name="Au C.H."/>
            <person name="Birren B.W."/>
            <person name="Borodovsky M."/>
            <person name="Burns C."/>
            <person name="Canbaeck B."/>
            <person name="Casselton L.A."/>
            <person name="Cheng C.K."/>
            <person name="Deng J."/>
            <person name="Dietrich F.S."/>
            <person name="Fargo D.C."/>
            <person name="Farman M.L."/>
            <person name="Gathman A.C."/>
            <person name="Goldberg J."/>
            <person name="Guigo R."/>
            <person name="Hoegger P.J."/>
            <person name="Hooker J.B."/>
            <person name="Huggins A."/>
            <person name="James T.Y."/>
            <person name="Kamada T."/>
            <person name="Kilaru S."/>
            <person name="Kodira C."/>
            <person name="Kuees U."/>
            <person name="Kupfer D."/>
            <person name="Kwan H.S."/>
            <person name="Lomsadze A."/>
            <person name="Li W."/>
            <person name="Lilly W.W."/>
            <person name="Ma L.-J."/>
            <person name="Mackey A.J."/>
            <person name="Manning G."/>
            <person name="Martin F."/>
            <person name="Muraguchi H."/>
            <person name="Natvig D.O."/>
            <person name="Palmerini H."/>
            <person name="Ramesh M.A."/>
            <person name="Rehmeyer C.J."/>
            <person name="Roe B.A."/>
            <person name="Shenoy N."/>
            <person name="Stanke M."/>
            <person name="Ter-Hovhannisyan V."/>
            <person name="Tunlid A."/>
            <person name="Velagapudi R."/>
            <person name="Vision T.J."/>
            <person name="Zeng Q."/>
            <person name="Zolan M.E."/>
            <person name="Pukkila P.J."/>
        </authorList>
    </citation>
    <scope>NUCLEOTIDE SEQUENCE [LARGE SCALE GENOMIC DNA]</scope>
    <source>
        <strain>Okayama-7 / 130 / ATCC MYA-4618 / FGSC 9003</strain>
    </source>
</reference>
<protein>
    <recommendedName>
        <fullName evidence="2">Isocitrate lyase</fullName>
        <shortName evidence="7">ICL</shortName>
        <shortName evidence="7">Isocitrase</shortName>
        <shortName evidence="7">Isocitratase</shortName>
        <ecNumber evidence="2">4.1.3.1</ecNumber>
    </recommendedName>
    <alternativeName>
        <fullName evidence="2">Methylisocitrate lyase</fullName>
        <shortName evidence="7">MICA</shortName>
        <ecNumber evidence="2">4.1.3.30</ecNumber>
    </alternativeName>
    <alternativeName>
        <fullName evidence="7">Threo-D(S)-isocitrate glyoxylate-lyase</fullName>
    </alternativeName>
</protein>
<accession>A8NR45</accession>
<keyword id="KW-0329">Glyoxylate bypass</keyword>
<keyword id="KW-0330">Glyoxysome</keyword>
<keyword id="KW-0456">Lyase</keyword>
<keyword id="KW-0460">Magnesium</keyword>
<keyword id="KW-0479">Metal-binding</keyword>
<keyword id="KW-0576">Peroxisome</keyword>
<keyword id="KW-1185">Reference proteome</keyword>
<keyword id="KW-0816">Tricarboxylic acid cycle</keyword>
<sequence>MSSERAQFAAEVAEVERWWKSPRFARVNRPYTAADVVSKRGTIKINYPSDVQGKKLWKLLSEHAKNGTPSHTYGALDPVQVTQMAKYLETVYVSGWQSSSTASSSNEPGPDLADYPSNTVPNKVEHLFMAQLFHDRKQREARSRMSDAELANTPVIDYLRPIVADADTGHGGLTAVMKLTKMFVEKGAAGIHIEDQAPGTKKCGHMAGKVLVPIQEHINRLVAIRLQYDIMGVENLVVARTDSEAATLITSNIDDRDHPFIQGSTNPSLPPLNNVMVEAEAQGKTGDQLQAIEDGWIKAANLQLFPQALAQALANEGASRSTVEKLVARVSRLSWPQAVAVAQKEFGLKQVPYWNWDAPRTREGYYRYQGGTECAIHRANAFAPYADLLWMETKKPILAQAKEFAAGVHAVHPGQWLAYNLSPSFNWEAAGLNAQDMQAYVWELGKLGFVWQFITLAGLHSNAYISDLFAQNFAKTGMKAYVELVQSREREIGCDVLTHQKWSGADYADSLIKTVTGGVSSTAAMGAGVTESQFTSKL</sequence>
<organism>
    <name type="scientific">Coprinopsis cinerea (strain Okayama-7 / 130 / ATCC MYA-4618 / FGSC 9003)</name>
    <name type="common">Inky cap fungus</name>
    <name type="synonym">Hormographiella aspergillata</name>
    <dbReference type="NCBI Taxonomy" id="240176"/>
    <lineage>
        <taxon>Eukaryota</taxon>
        <taxon>Fungi</taxon>
        <taxon>Dikarya</taxon>
        <taxon>Basidiomycota</taxon>
        <taxon>Agaricomycotina</taxon>
        <taxon>Agaricomycetes</taxon>
        <taxon>Agaricomycetidae</taxon>
        <taxon>Agaricales</taxon>
        <taxon>Agaricineae</taxon>
        <taxon>Psathyrellaceae</taxon>
        <taxon>Coprinopsis</taxon>
    </lineage>
</organism>